<reference key="1">
    <citation type="journal article" date="2008" name="J. Bacteriol.">
        <title>Insights into the environmental resistance gene pool from the genome sequence of the multidrug-resistant environmental isolate Escherichia coli SMS-3-5.</title>
        <authorList>
            <person name="Fricke W.F."/>
            <person name="Wright M.S."/>
            <person name="Lindell A.H."/>
            <person name="Harkins D.M."/>
            <person name="Baker-Austin C."/>
            <person name="Ravel J."/>
            <person name="Stepanauskas R."/>
        </authorList>
    </citation>
    <scope>NUCLEOTIDE SEQUENCE [LARGE SCALE GENOMIC DNA]</scope>
    <source>
        <strain>SMS-3-5 / SECEC</strain>
    </source>
</reference>
<comment type="function">
    <text evidence="1">Transfers a phosphoglycerol residue from phosphatidylglycerol to the membrane-bound nascent glucan backbones.</text>
</comment>
<comment type="catalytic activity">
    <reaction evidence="1">
        <text>a phosphatidylglycerol + a membrane-derived-oligosaccharide D-glucose = a 1,2-diacyl-sn-glycerol + a membrane-derived-oligosaccharide 6-(glycerophospho)-D-glucose.</text>
        <dbReference type="EC" id="2.7.8.20"/>
    </reaction>
</comment>
<comment type="pathway">
    <text evidence="1">Glycan metabolism; osmoregulated periplasmic glucan (OPG) biosynthesis.</text>
</comment>
<comment type="subcellular location">
    <subcellularLocation>
        <location evidence="1">Cell inner membrane</location>
        <topology evidence="1">Multi-pass membrane protein</topology>
    </subcellularLocation>
</comment>
<comment type="similarity">
    <text evidence="1">Belongs to the OpgB family.</text>
</comment>
<sequence length="763" mass="85477">MSELLSFALFLASVLIYAWKAGRNTWWFAATLTVLGLFVVLNITLFASDYFTGDGINDAVLYTLTNSLTGAGVSKYILPGIGIVLGLTAVFGALGWILRRRRHHPHHFGYSLLALLLALGSVDASPAFRQITELVKSQSRDGDPDFAAYYKEPSKTIPDPKLNLVYIYGESLERTYFDNEAFPDLTPELGALKNEGLDFSHTQQLPGTDYTIAGMVASQCGIPLFAPFEGNASASVSSFFPQNICLGDILKNSGYQNYFVQGANLRFAGKDVFLKSHGFDHLFGSEELKSVVADPHYRNDWGFYDDTVLDEAWKKFEELSRSGQRFSLFTLTVDTHHPDGFISRTCNRKKYDFDGKPNQSFSAVSCSQENIATFINKIKASPWFKDTVIVVSSDHLAMNNTAWKYLNKQDRNNLFFVIRGDKPQQETLAVKRNTMDNGATVLDILGGDNYLGLGRSSLSGQSMSEIFLNIKEKTLAWKPDIIRLWKFPKEMKEFTIDQQKNMIAFSGSHFRLPLLLRVSDKRVEPLPESEYSAPLRFQLADFAPRDNFVWVDRCYKMAQLWAPELALSTNWCVSQGQLGGQQIVQHVDKTTWKGKTAFKDTVIDMARYKGNVDTLKIVDNDIRYKADSFIFNVAGAPEEVKQFSGISRPESWGRWSNAQLGDEVKIEYKHPLPKKFDLVITAKAYGNNASRPIPVRVGNEEQTLVLGNEVTTTTLHFDNPTDADTLVIVPPEPVSTNEGNILGHSPRKLGIGMVEIKVVEREG</sequence>
<evidence type="ECO:0000255" key="1">
    <source>
        <dbReference type="HAMAP-Rule" id="MF_01070"/>
    </source>
</evidence>
<accession>B1LEG3</accession>
<organism>
    <name type="scientific">Escherichia coli (strain SMS-3-5 / SECEC)</name>
    <dbReference type="NCBI Taxonomy" id="439855"/>
    <lineage>
        <taxon>Bacteria</taxon>
        <taxon>Pseudomonadati</taxon>
        <taxon>Pseudomonadota</taxon>
        <taxon>Gammaproteobacteria</taxon>
        <taxon>Enterobacterales</taxon>
        <taxon>Enterobacteriaceae</taxon>
        <taxon>Escherichia</taxon>
    </lineage>
</organism>
<proteinExistence type="inferred from homology"/>
<protein>
    <recommendedName>
        <fullName evidence="1">Phosphoglycerol transferase I</fullName>
        <ecNumber evidence="1">2.7.8.20</ecNumber>
    </recommendedName>
    <alternativeName>
        <fullName evidence="1">Phosphatidylglycerol--membrane-oligosaccharide glycerophosphotransferase</fullName>
    </alternativeName>
</protein>
<feature type="chain" id="PRO_1000136626" description="Phosphoglycerol transferase I">
    <location>
        <begin position="1"/>
        <end position="763"/>
    </location>
</feature>
<feature type="transmembrane region" description="Helical" evidence="1">
    <location>
        <begin position="1"/>
        <end position="21"/>
    </location>
</feature>
<feature type="transmembrane region" description="Helical" evidence="1">
    <location>
        <begin position="26"/>
        <end position="46"/>
    </location>
</feature>
<feature type="transmembrane region" description="Helical" evidence="1">
    <location>
        <begin position="77"/>
        <end position="97"/>
    </location>
</feature>
<feature type="transmembrane region" description="Helical" evidence="1">
    <location>
        <begin position="108"/>
        <end position="128"/>
    </location>
</feature>
<gene>
    <name evidence="1" type="primary">mdoB</name>
    <name evidence="1" type="synonym">opgB</name>
    <name type="ordered locus">EcSMS35_4904</name>
</gene>
<dbReference type="EC" id="2.7.8.20" evidence="1"/>
<dbReference type="EMBL" id="CP000970">
    <property type="protein sequence ID" value="ACB18363.1"/>
    <property type="molecule type" value="Genomic_DNA"/>
</dbReference>
<dbReference type="RefSeq" id="WP_001292648.1">
    <property type="nucleotide sequence ID" value="NC_010498.1"/>
</dbReference>
<dbReference type="SMR" id="B1LEG3"/>
<dbReference type="KEGG" id="ecm:EcSMS35_4904"/>
<dbReference type="HOGENOM" id="CLU_023986_1_0_6"/>
<dbReference type="UniPathway" id="UPA00637"/>
<dbReference type="Proteomes" id="UP000007011">
    <property type="component" value="Chromosome"/>
</dbReference>
<dbReference type="GO" id="GO:0005886">
    <property type="term" value="C:plasma membrane"/>
    <property type="evidence" value="ECO:0007669"/>
    <property type="project" value="UniProtKB-SubCell"/>
</dbReference>
<dbReference type="GO" id="GO:0008960">
    <property type="term" value="F:phosphatidylglycerol-membrane-oligosaccharide glycerophosphotransferase activity"/>
    <property type="evidence" value="ECO:0007669"/>
    <property type="project" value="UniProtKB-UniRule"/>
</dbReference>
<dbReference type="GO" id="GO:0009250">
    <property type="term" value="P:glucan biosynthetic process"/>
    <property type="evidence" value="ECO:0007669"/>
    <property type="project" value="UniProtKB-UniRule"/>
</dbReference>
<dbReference type="CDD" id="cd16015">
    <property type="entry name" value="LTA_synthase"/>
    <property type="match status" value="1"/>
</dbReference>
<dbReference type="FunFam" id="3.40.720.10:FF:000009">
    <property type="entry name" value="Phosphoglycerol transferase I"/>
    <property type="match status" value="1"/>
</dbReference>
<dbReference type="Gene3D" id="3.40.720.10">
    <property type="entry name" value="Alkaline Phosphatase, subunit A"/>
    <property type="match status" value="1"/>
</dbReference>
<dbReference type="HAMAP" id="MF_01070">
    <property type="entry name" value="MdoB_OpgB"/>
    <property type="match status" value="1"/>
</dbReference>
<dbReference type="InterPro" id="IPR017850">
    <property type="entry name" value="Alkaline_phosphatase_core_sf"/>
</dbReference>
<dbReference type="InterPro" id="IPR054288">
    <property type="entry name" value="DUF7024"/>
</dbReference>
<dbReference type="InterPro" id="IPR020881">
    <property type="entry name" value="OpgB"/>
</dbReference>
<dbReference type="InterPro" id="IPR050448">
    <property type="entry name" value="OpgB/LTA_synthase_biosynth"/>
</dbReference>
<dbReference type="InterPro" id="IPR000917">
    <property type="entry name" value="Sulfatase_N"/>
</dbReference>
<dbReference type="NCBIfam" id="NF003000">
    <property type="entry name" value="PRK03776.1"/>
    <property type="match status" value="1"/>
</dbReference>
<dbReference type="PANTHER" id="PTHR47371">
    <property type="entry name" value="LIPOTEICHOIC ACID SYNTHASE"/>
    <property type="match status" value="1"/>
</dbReference>
<dbReference type="PANTHER" id="PTHR47371:SF3">
    <property type="entry name" value="PHOSPHOGLYCEROL TRANSFERASE I"/>
    <property type="match status" value="1"/>
</dbReference>
<dbReference type="Pfam" id="PF22895">
    <property type="entry name" value="DUF7024"/>
    <property type="match status" value="1"/>
</dbReference>
<dbReference type="Pfam" id="PF00884">
    <property type="entry name" value="Sulfatase"/>
    <property type="match status" value="1"/>
</dbReference>
<dbReference type="SUPFAM" id="SSF53649">
    <property type="entry name" value="Alkaline phosphatase-like"/>
    <property type="match status" value="1"/>
</dbReference>
<keyword id="KW-0997">Cell inner membrane</keyword>
<keyword id="KW-1003">Cell membrane</keyword>
<keyword id="KW-0472">Membrane</keyword>
<keyword id="KW-0808">Transferase</keyword>
<keyword id="KW-0812">Transmembrane</keyword>
<keyword id="KW-1133">Transmembrane helix</keyword>
<name>OPGB_ECOSM</name>